<accession>Q8FT43</accession>
<gene>
    <name type="primary">pyrF</name>
    <name type="ordered locus">CE1728</name>
</gene>
<comment type="catalytic activity">
    <reaction>
        <text>orotidine 5'-phosphate + H(+) = UMP + CO2</text>
        <dbReference type="Rhea" id="RHEA:11596"/>
        <dbReference type="ChEBI" id="CHEBI:15378"/>
        <dbReference type="ChEBI" id="CHEBI:16526"/>
        <dbReference type="ChEBI" id="CHEBI:57538"/>
        <dbReference type="ChEBI" id="CHEBI:57865"/>
        <dbReference type="EC" id="4.1.1.23"/>
    </reaction>
</comment>
<comment type="pathway">
    <text>Pyrimidine metabolism; UMP biosynthesis via de novo pathway; UMP from orotate: step 2/2.</text>
</comment>
<comment type="similarity">
    <text evidence="2">Belongs to the OMP decarboxylase family. Type 2 subfamily.</text>
</comment>
<feature type="chain" id="PRO_0000134624" description="Orotidine 5'-phosphate decarboxylase">
    <location>
        <begin position="1"/>
        <end position="280"/>
    </location>
</feature>
<feature type="active site" description="Proton donor" evidence="1">
    <location>
        <position position="97"/>
    </location>
</feature>
<organism>
    <name type="scientific">Corynebacterium efficiens (strain DSM 44549 / YS-314 / AJ 12310 / JCM 11189 / NBRC 100395)</name>
    <dbReference type="NCBI Taxonomy" id="196164"/>
    <lineage>
        <taxon>Bacteria</taxon>
        <taxon>Bacillati</taxon>
        <taxon>Actinomycetota</taxon>
        <taxon>Actinomycetes</taxon>
        <taxon>Mycobacteriales</taxon>
        <taxon>Corynebacteriaceae</taxon>
        <taxon>Corynebacterium</taxon>
    </lineage>
</organism>
<proteinExistence type="inferred from homology"/>
<protein>
    <recommendedName>
        <fullName>Orotidine 5'-phosphate decarboxylase</fullName>
        <ecNumber>4.1.1.23</ecNumber>
    </recommendedName>
    <alternativeName>
        <fullName>OMP decarboxylase</fullName>
        <shortName>OMPDCase</shortName>
        <shortName>OMPdecase</shortName>
    </alternativeName>
</protein>
<name>PYRF_COREF</name>
<keyword id="KW-0210">Decarboxylase</keyword>
<keyword id="KW-0456">Lyase</keyword>
<keyword id="KW-0665">Pyrimidine biosynthesis</keyword>
<keyword id="KW-1185">Reference proteome</keyword>
<dbReference type="EC" id="4.1.1.23"/>
<dbReference type="EMBL" id="BA000035">
    <property type="protein sequence ID" value="BAC18538.1"/>
    <property type="molecule type" value="Genomic_DNA"/>
</dbReference>
<dbReference type="RefSeq" id="WP_006767728.1">
    <property type="nucleotide sequence ID" value="NC_004369.1"/>
</dbReference>
<dbReference type="SMR" id="Q8FT43"/>
<dbReference type="STRING" id="196164.gene:10742149"/>
<dbReference type="KEGG" id="cef:CE1728"/>
<dbReference type="eggNOG" id="COG0284">
    <property type="taxonomic scope" value="Bacteria"/>
</dbReference>
<dbReference type="HOGENOM" id="CLU_060704_0_0_11"/>
<dbReference type="OrthoDB" id="9808470at2"/>
<dbReference type="UniPathway" id="UPA00070">
    <property type="reaction ID" value="UER00120"/>
</dbReference>
<dbReference type="Proteomes" id="UP000001409">
    <property type="component" value="Chromosome"/>
</dbReference>
<dbReference type="GO" id="GO:0004590">
    <property type="term" value="F:orotidine-5'-phosphate decarboxylase activity"/>
    <property type="evidence" value="ECO:0007669"/>
    <property type="project" value="UniProtKB-UniRule"/>
</dbReference>
<dbReference type="GO" id="GO:0006207">
    <property type="term" value="P:'de novo' pyrimidine nucleobase biosynthetic process"/>
    <property type="evidence" value="ECO:0007669"/>
    <property type="project" value="InterPro"/>
</dbReference>
<dbReference type="GO" id="GO:0044205">
    <property type="term" value="P:'de novo' UMP biosynthetic process"/>
    <property type="evidence" value="ECO:0007669"/>
    <property type="project" value="UniProtKB-UniRule"/>
</dbReference>
<dbReference type="CDD" id="cd04725">
    <property type="entry name" value="OMP_decarboxylase_like"/>
    <property type="match status" value="1"/>
</dbReference>
<dbReference type="Gene3D" id="3.20.20.70">
    <property type="entry name" value="Aldolase class I"/>
    <property type="match status" value="1"/>
</dbReference>
<dbReference type="HAMAP" id="MF_01215">
    <property type="entry name" value="OMPdecase_type2"/>
    <property type="match status" value="1"/>
</dbReference>
<dbReference type="InterPro" id="IPR013785">
    <property type="entry name" value="Aldolase_TIM"/>
</dbReference>
<dbReference type="InterPro" id="IPR018089">
    <property type="entry name" value="OMPdecase_AS"/>
</dbReference>
<dbReference type="InterPro" id="IPR011995">
    <property type="entry name" value="OMPdecase_type-2"/>
</dbReference>
<dbReference type="InterPro" id="IPR001754">
    <property type="entry name" value="OMPdeCOase_dom"/>
</dbReference>
<dbReference type="InterPro" id="IPR011060">
    <property type="entry name" value="RibuloseP-bd_barrel"/>
</dbReference>
<dbReference type="NCBIfam" id="TIGR02127">
    <property type="entry name" value="pyrF_sub2"/>
    <property type="match status" value="1"/>
</dbReference>
<dbReference type="PANTHER" id="PTHR43375">
    <property type="entry name" value="OROTIDINE 5'-PHOSPHATE DECARBOXYLASE"/>
    <property type="match status" value="1"/>
</dbReference>
<dbReference type="PANTHER" id="PTHR43375:SF1">
    <property type="entry name" value="OROTIDINE 5'-PHOSPHATE DECARBOXYLASE"/>
    <property type="match status" value="1"/>
</dbReference>
<dbReference type="Pfam" id="PF00215">
    <property type="entry name" value="OMPdecase"/>
    <property type="match status" value="1"/>
</dbReference>
<dbReference type="SMART" id="SM00934">
    <property type="entry name" value="OMPdecase"/>
    <property type="match status" value="1"/>
</dbReference>
<dbReference type="SUPFAM" id="SSF51366">
    <property type="entry name" value="Ribulose-phoshate binding barrel"/>
    <property type="match status" value="1"/>
</dbReference>
<dbReference type="PROSITE" id="PS00156">
    <property type="entry name" value="OMPDECASE"/>
    <property type="match status" value="1"/>
</dbReference>
<evidence type="ECO:0000250" key="1"/>
<evidence type="ECO:0000305" key="2"/>
<sequence length="280" mass="28927">MTQTFGENLLDAASTRGRLCVGIDPHESLLRAWGLPVDATGLAEFSRICVEAFADTVALVKPQVAFYERFGSRGFAVLEETIGTLRERGCLVVSDAKRGDIGSTMAGYATAWLDPGSPLSSDAVTVSPYLGFGSLQPVFDLAEEHGRGVFVLAATSNPEARVLQDQTDASGVSISQQIVNEAAALNAPHLAQHRAGNIGVVVGATLTDPPALSGLNGAILMPGVGTQGGTAQDVGTIAGDMAHLAFPNVSRAVLAQGPDVGNLRVAVSETAAEFPGFPRS</sequence>
<reference key="1">
    <citation type="journal article" date="2003" name="Genome Res.">
        <title>Comparative complete genome sequence analysis of the amino acid replacements responsible for the thermostability of Corynebacterium efficiens.</title>
        <authorList>
            <person name="Nishio Y."/>
            <person name="Nakamura Y."/>
            <person name="Kawarabayasi Y."/>
            <person name="Usuda Y."/>
            <person name="Kimura E."/>
            <person name="Sugimoto S."/>
            <person name="Matsui K."/>
            <person name="Yamagishi A."/>
            <person name="Kikuchi H."/>
            <person name="Ikeo K."/>
            <person name="Gojobori T."/>
        </authorList>
    </citation>
    <scope>NUCLEOTIDE SEQUENCE [LARGE SCALE GENOMIC DNA]</scope>
    <source>
        <strain>DSM 44549 / YS-314 / AJ 12310 / JCM 11189 / NBRC 100395</strain>
    </source>
</reference>